<comment type="function">
    <text evidence="1">Catalyzes the condensation of iminoaspartate with dihydroxyacetone phosphate to form quinolinate.</text>
</comment>
<comment type="catalytic activity">
    <reaction evidence="1">
        <text>iminosuccinate + dihydroxyacetone phosphate = quinolinate + phosphate + 2 H2O + H(+)</text>
        <dbReference type="Rhea" id="RHEA:25888"/>
        <dbReference type="ChEBI" id="CHEBI:15377"/>
        <dbReference type="ChEBI" id="CHEBI:15378"/>
        <dbReference type="ChEBI" id="CHEBI:29959"/>
        <dbReference type="ChEBI" id="CHEBI:43474"/>
        <dbReference type="ChEBI" id="CHEBI:57642"/>
        <dbReference type="ChEBI" id="CHEBI:77875"/>
        <dbReference type="EC" id="2.5.1.72"/>
    </reaction>
    <physiologicalReaction direction="left-to-right" evidence="1">
        <dbReference type="Rhea" id="RHEA:25889"/>
    </physiologicalReaction>
</comment>
<comment type="cofactor">
    <cofactor evidence="1">
        <name>[4Fe-4S] cluster</name>
        <dbReference type="ChEBI" id="CHEBI:49883"/>
    </cofactor>
    <text evidence="1">Binds 1 [4Fe-4S] cluster per subunit.</text>
</comment>
<comment type="pathway">
    <text evidence="1">Cofactor biosynthesis; NAD(+) biosynthesis; quinolinate from iminoaspartate: step 1/1.</text>
</comment>
<comment type="subcellular location">
    <subcellularLocation>
        <location evidence="1">Cytoplasm</location>
    </subcellularLocation>
</comment>
<comment type="similarity">
    <text evidence="1">Belongs to the quinolinate synthase family. Type 2 subfamily.</text>
</comment>
<proteinExistence type="inferred from homology"/>
<gene>
    <name evidence="1" type="primary">nadA</name>
    <name type="ordered locus">TK0296</name>
</gene>
<keyword id="KW-0004">4Fe-4S</keyword>
<keyword id="KW-0963">Cytoplasm</keyword>
<keyword id="KW-0408">Iron</keyword>
<keyword id="KW-0411">Iron-sulfur</keyword>
<keyword id="KW-0479">Metal-binding</keyword>
<keyword id="KW-0662">Pyridine nucleotide biosynthesis</keyword>
<keyword id="KW-1185">Reference proteome</keyword>
<keyword id="KW-0808">Transferase</keyword>
<feature type="chain" id="PRO_0000155811" description="Quinolinate synthase">
    <location>
        <begin position="1"/>
        <end position="302"/>
    </location>
</feature>
<feature type="binding site" evidence="1">
    <location>
        <position position="24"/>
    </location>
    <ligand>
        <name>iminosuccinate</name>
        <dbReference type="ChEBI" id="CHEBI:77875"/>
    </ligand>
</feature>
<feature type="binding site" evidence="1">
    <location>
        <position position="41"/>
    </location>
    <ligand>
        <name>iminosuccinate</name>
        <dbReference type="ChEBI" id="CHEBI:77875"/>
    </ligand>
</feature>
<feature type="binding site" evidence="1">
    <location>
        <position position="86"/>
    </location>
    <ligand>
        <name>[4Fe-4S] cluster</name>
        <dbReference type="ChEBI" id="CHEBI:49883"/>
    </ligand>
</feature>
<feature type="binding site" evidence="1">
    <location>
        <begin position="112"/>
        <end position="114"/>
    </location>
    <ligand>
        <name>iminosuccinate</name>
        <dbReference type="ChEBI" id="CHEBI:77875"/>
    </ligand>
</feature>
<feature type="binding site" evidence="1">
    <location>
        <position position="129"/>
    </location>
    <ligand>
        <name>iminosuccinate</name>
        <dbReference type="ChEBI" id="CHEBI:77875"/>
    </ligand>
</feature>
<feature type="binding site" evidence="1">
    <location>
        <position position="173"/>
    </location>
    <ligand>
        <name>[4Fe-4S] cluster</name>
        <dbReference type="ChEBI" id="CHEBI:49883"/>
    </ligand>
</feature>
<feature type="binding site" evidence="1">
    <location>
        <begin position="199"/>
        <end position="201"/>
    </location>
    <ligand>
        <name>iminosuccinate</name>
        <dbReference type="ChEBI" id="CHEBI:77875"/>
    </ligand>
</feature>
<feature type="binding site" evidence="1">
    <location>
        <position position="216"/>
    </location>
    <ligand>
        <name>iminosuccinate</name>
        <dbReference type="ChEBI" id="CHEBI:77875"/>
    </ligand>
</feature>
<feature type="binding site" evidence="1">
    <location>
        <position position="259"/>
    </location>
    <ligand>
        <name>[4Fe-4S] cluster</name>
        <dbReference type="ChEBI" id="CHEBI:49883"/>
    </ligand>
</feature>
<evidence type="ECO:0000255" key="1">
    <source>
        <dbReference type="HAMAP-Rule" id="MF_00568"/>
    </source>
</evidence>
<name>NADA_THEKO</name>
<reference key="1">
    <citation type="journal article" date="2005" name="Genome Res.">
        <title>Complete genome sequence of the hyperthermophilic archaeon Thermococcus kodakaraensis KOD1 and comparison with Pyrococcus genomes.</title>
        <authorList>
            <person name="Fukui T."/>
            <person name="Atomi H."/>
            <person name="Kanai T."/>
            <person name="Matsumi R."/>
            <person name="Fujiwara S."/>
            <person name="Imanaka T."/>
        </authorList>
    </citation>
    <scope>NUCLEOTIDE SEQUENCE [LARGE SCALE GENOMIC DNA]</scope>
    <source>
        <strain>ATCC BAA-918 / JCM 12380 / KOD1</strain>
    </source>
</reference>
<sequence>MEKEKLIEEINRLKEERNAIIMAHNYQLPEIQDIADFLGDSLELARKAVNIDADVIVFAGVDFMAETAKILNPEKTVLLPTPRATCAMANMLTIKHIIEAKKKYPDAPVVLYVNSSAEAKAYADVTVTSANAAKIVGKLDSDVVIFGPDKNLAHYVAKVTGKKVIPVPPNGHCYVHRKFTLEDVERARKLYPNAKLMVHPECEPEVQEQADIIVSTGGMIKRACEHDEWVVFTEREMVCRLQKLYPSKKFYPAREDATCIGMKAITLNHIYESLRDMKYRVEVPAEIAEKARKAIERMLEMS</sequence>
<dbReference type="EC" id="2.5.1.72" evidence="1"/>
<dbReference type="EMBL" id="AP006878">
    <property type="protein sequence ID" value="BAD84485.1"/>
    <property type="molecule type" value="Genomic_DNA"/>
</dbReference>
<dbReference type="RefSeq" id="WP_011249251.1">
    <property type="nucleotide sequence ID" value="NC_006624.1"/>
</dbReference>
<dbReference type="SMR" id="Q5JFX9"/>
<dbReference type="FunCoup" id="Q5JFX9">
    <property type="interactions" value="55"/>
</dbReference>
<dbReference type="IntAct" id="Q5JFX9">
    <property type="interactions" value="1"/>
</dbReference>
<dbReference type="MINT" id="Q5JFX9"/>
<dbReference type="STRING" id="69014.TK0296"/>
<dbReference type="EnsemblBacteria" id="BAD84485">
    <property type="protein sequence ID" value="BAD84485"/>
    <property type="gene ID" value="TK0296"/>
</dbReference>
<dbReference type="GeneID" id="78446797"/>
<dbReference type="KEGG" id="tko:TK0296"/>
<dbReference type="PATRIC" id="fig|69014.16.peg.295"/>
<dbReference type="eggNOG" id="arCOG04459">
    <property type="taxonomic scope" value="Archaea"/>
</dbReference>
<dbReference type="HOGENOM" id="CLU_047382_0_0_2"/>
<dbReference type="InParanoid" id="Q5JFX9"/>
<dbReference type="OrthoDB" id="5931at2157"/>
<dbReference type="PhylomeDB" id="Q5JFX9"/>
<dbReference type="UniPathway" id="UPA00253">
    <property type="reaction ID" value="UER00327"/>
</dbReference>
<dbReference type="Proteomes" id="UP000000536">
    <property type="component" value="Chromosome"/>
</dbReference>
<dbReference type="GO" id="GO:0005737">
    <property type="term" value="C:cytoplasm"/>
    <property type="evidence" value="ECO:0007669"/>
    <property type="project" value="UniProtKB-SubCell"/>
</dbReference>
<dbReference type="GO" id="GO:0051539">
    <property type="term" value="F:4 iron, 4 sulfur cluster binding"/>
    <property type="evidence" value="ECO:0000318"/>
    <property type="project" value="GO_Central"/>
</dbReference>
<dbReference type="GO" id="GO:0046872">
    <property type="term" value="F:metal ion binding"/>
    <property type="evidence" value="ECO:0007669"/>
    <property type="project" value="UniProtKB-KW"/>
</dbReference>
<dbReference type="GO" id="GO:0008987">
    <property type="term" value="F:quinolinate synthetase A activity"/>
    <property type="evidence" value="ECO:0000318"/>
    <property type="project" value="GO_Central"/>
</dbReference>
<dbReference type="GO" id="GO:0034628">
    <property type="term" value="P:'de novo' NAD biosynthetic process from L-aspartate"/>
    <property type="evidence" value="ECO:0000318"/>
    <property type="project" value="GO_Central"/>
</dbReference>
<dbReference type="FunFam" id="3.40.50.10800:FF:000002">
    <property type="entry name" value="Quinolinate synthase A"/>
    <property type="match status" value="1"/>
</dbReference>
<dbReference type="Gene3D" id="3.40.50.10800">
    <property type="entry name" value="NadA-like"/>
    <property type="match status" value="3"/>
</dbReference>
<dbReference type="HAMAP" id="MF_00568">
    <property type="entry name" value="NadA_type2"/>
    <property type="match status" value="1"/>
</dbReference>
<dbReference type="InterPro" id="IPR003473">
    <property type="entry name" value="NadA"/>
</dbReference>
<dbReference type="InterPro" id="IPR036094">
    <property type="entry name" value="NadA_sf"/>
</dbReference>
<dbReference type="InterPro" id="IPR023066">
    <property type="entry name" value="Quinolinate_synth_type2"/>
</dbReference>
<dbReference type="NCBIfam" id="TIGR00550">
    <property type="entry name" value="nadA"/>
    <property type="match status" value="1"/>
</dbReference>
<dbReference type="NCBIfam" id="NF006878">
    <property type="entry name" value="PRK09375.1-2"/>
    <property type="match status" value="1"/>
</dbReference>
<dbReference type="PANTHER" id="PTHR30573:SF0">
    <property type="entry name" value="QUINOLINATE SYNTHASE, CHLOROPLASTIC"/>
    <property type="match status" value="1"/>
</dbReference>
<dbReference type="PANTHER" id="PTHR30573">
    <property type="entry name" value="QUINOLINATE SYNTHETASE A"/>
    <property type="match status" value="1"/>
</dbReference>
<dbReference type="Pfam" id="PF02445">
    <property type="entry name" value="NadA"/>
    <property type="match status" value="1"/>
</dbReference>
<dbReference type="SUPFAM" id="SSF142754">
    <property type="entry name" value="NadA-like"/>
    <property type="match status" value="1"/>
</dbReference>
<protein>
    <recommendedName>
        <fullName evidence="1">Quinolinate synthase</fullName>
        <ecNumber evidence="1">2.5.1.72</ecNumber>
    </recommendedName>
</protein>
<organism>
    <name type="scientific">Thermococcus kodakarensis (strain ATCC BAA-918 / JCM 12380 / KOD1)</name>
    <name type="common">Pyrococcus kodakaraensis (strain KOD1)</name>
    <dbReference type="NCBI Taxonomy" id="69014"/>
    <lineage>
        <taxon>Archaea</taxon>
        <taxon>Methanobacteriati</taxon>
        <taxon>Methanobacteriota</taxon>
        <taxon>Thermococci</taxon>
        <taxon>Thermococcales</taxon>
        <taxon>Thermococcaceae</taxon>
        <taxon>Thermococcus</taxon>
    </lineage>
</organism>
<accession>Q5JFX9</accession>